<name>HSCB_CITK8</name>
<proteinExistence type="inferred from homology"/>
<comment type="function">
    <text evidence="1">Co-chaperone involved in the maturation of iron-sulfur cluster-containing proteins. Seems to help targeting proteins to be folded toward HscA.</text>
</comment>
<comment type="subunit">
    <text evidence="1">Interacts with HscA and stimulates its ATPase activity. Interacts with IscU.</text>
</comment>
<comment type="similarity">
    <text evidence="1">Belongs to the HscB family.</text>
</comment>
<feature type="chain" id="PRO_1000083004" description="Co-chaperone protein HscB">
    <location>
        <begin position="1"/>
        <end position="171"/>
    </location>
</feature>
<feature type="domain" description="J" evidence="1">
    <location>
        <begin position="2"/>
        <end position="74"/>
    </location>
</feature>
<accession>A8AD55</accession>
<protein>
    <recommendedName>
        <fullName evidence="1">Co-chaperone protein HscB</fullName>
    </recommendedName>
    <alternativeName>
        <fullName evidence="1">Hsc20</fullName>
    </alternativeName>
</protein>
<dbReference type="EMBL" id="CP000822">
    <property type="protein sequence ID" value="ABV11418.1"/>
    <property type="molecule type" value="Genomic_DNA"/>
</dbReference>
<dbReference type="RefSeq" id="WP_012131249.1">
    <property type="nucleotide sequence ID" value="NC_009792.1"/>
</dbReference>
<dbReference type="SMR" id="A8AD55"/>
<dbReference type="STRING" id="290338.CKO_00254"/>
<dbReference type="GeneID" id="45134537"/>
<dbReference type="KEGG" id="cko:CKO_00254"/>
<dbReference type="HOGENOM" id="CLU_068529_2_0_6"/>
<dbReference type="OrthoDB" id="287587at2"/>
<dbReference type="Proteomes" id="UP000008148">
    <property type="component" value="Chromosome"/>
</dbReference>
<dbReference type="GO" id="GO:1990230">
    <property type="term" value="C:iron-sulfur cluster transfer complex"/>
    <property type="evidence" value="ECO:0007669"/>
    <property type="project" value="TreeGrafter"/>
</dbReference>
<dbReference type="GO" id="GO:0001671">
    <property type="term" value="F:ATPase activator activity"/>
    <property type="evidence" value="ECO:0007669"/>
    <property type="project" value="InterPro"/>
</dbReference>
<dbReference type="GO" id="GO:0051087">
    <property type="term" value="F:protein-folding chaperone binding"/>
    <property type="evidence" value="ECO:0007669"/>
    <property type="project" value="InterPro"/>
</dbReference>
<dbReference type="GO" id="GO:0044571">
    <property type="term" value="P:[2Fe-2S] cluster assembly"/>
    <property type="evidence" value="ECO:0007669"/>
    <property type="project" value="InterPro"/>
</dbReference>
<dbReference type="GO" id="GO:0051259">
    <property type="term" value="P:protein complex oligomerization"/>
    <property type="evidence" value="ECO:0007669"/>
    <property type="project" value="InterPro"/>
</dbReference>
<dbReference type="GO" id="GO:0006457">
    <property type="term" value="P:protein folding"/>
    <property type="evidence" value="ECO:0007669"/>
    <property type="project" value="UniProtKB-UniRule"/>
</dbReference>
<dbReference type="CDD" id="cd06257">
    <property type="entry name" value="DnaJ"/>
    <property type="match status" value="1"/>
</dbReference>
<dbReference type="FunFam" id="1.10.287.110:FF:000008">
    <property type="entry name" value="Co-chaperone protein HscB"/>
    <property type="match status" value="1"/>
</dbReference>
<dbReference type="FunFam" id="1.20.1280.20:FF:000001">
    <property type="entry name" value="Co-chaperone protein HscB"/>
    <property type="match status" value="1"/>
</dbReference>
<dbReference type="Gene3D" id="1.10.287.110">
    <property type="entry name" value="DnaJ domain"/>
    <property type="match status" value="1"/>
</dbReference>
<dbReference type="Gene3D" id="1.20.1280.20">
    <property type="entry name" value="HscB, C-terminal domain"/>
    <property type="match status" value="1"/>
</dbReference>
<dbReference type="HAMAP" id="MF_00682">
    <property type="entry name" value="HscB"/>
    <property type="match status" value="1"/>
</dbReference>
<dbReference type="InterPro" id="IPR001623">
    <property type="entry name" value="DnaJ_domain"/>
</dbReference>
<dbReference type="InterPro" id="IPR004640">
    <property type="entry name" value="HscB"/>
</dbReference>
<dbReference type="InterPro" id="IPR036386">
    <property type="entry name" value="HscB_C_sf"/>
</dbReference>
<dbReference type="InterPro" id="IPR009073">
    <property type="entry name" value="HscB_oligo_C"/>
</dbReference>
<dbReference type="InterPro" id="IPR036869">
    <property type="entry name" value="J_dom_sf"/>
</dbReference>
<dbReference type="NCBIfam" id="TIGR00714">
    <property type="entry name" value="hscB"/>
    <property type="match status" value="1"/>
</dbReference>
<dbReference type="NCBIfam" id="NF003449">
    <property type="entry name" value="PRK05014.1"/>
    <property type="match status" value="1"/>
</dbReference>
<dbReference type="PANTHER" id="PTHR14021">
    <property type="entry name" value="IRON-SULFUR CLUSTER CO-CHAPERONE PROTEIN HSCB"/>
    <property type="match status" value="1"/>
</dbReference>
<dbReference type="PANTHER" id="PTHR14021:SF15">
    <property type="entry name" value="IRON-SULFUR CLUSTER CO-CHAPERONE PROTEIN HSCB"/>
    <property type="match status" value="1"/>
</dbReference>
<dbReference type="Pfam" id="PF07743">
    <property type="entry name" value="HSCB_C"/>
    <property type="match status" value="1"/>
</dbReference>
<dbReference type="SMART" id="SM00271">
    <property type="entry name" value="DnaJ"/>
    <property type="match status" value="1"/>
</dbReference>
<dbReference type="SUPFAM" id="SSF46565">
    <property type="entry name" value="Chaperone J-domain"/>
    <property type="match status" value="1"/>
</dbReference>
<dbReference type="SUPFAM" id="SSF47144">
    <property type="entry name" value="HSC20 (HSCB), C-terminal oligomerisation domain"/>
    <property type="match status" value="1"/>
</dbReference>
<dbReference type="PROSITE" id="PS50076">
    <property type="entry name" value="DNAJ_2"/>
    <property type="match status" value="1"/>
</dbReference>
<reference key="1">
    <citation type="submission" date="2007-08" db="EMBL/GenBank/DDBJ databases">
        <authorList>
            <consortium name="The Citrobacter koseri Genome Sequencing Project"/>
            <person name="McClelland M."/>
            <person name="Sanderson E.K."/>
            <person name="Porwollik S."/>
            <person name="Spieth J."/>
            <person name="Clifton W.S."/>
            <person name="Latreille P."/>
            <person name="Courtney L."/>
            <person name="Wang C."/>
            <person name="Pepin K."/>
            <person name="Bhonagiri V."/>
            <person name="Nash W."/>
            <person name="Johnson M."/>
            <person name="Thiruvilangam P."/>
            <person name="Wilson R."/>
        </authorList>
    </citation>
    <scope>NUCLEOTIDE SEQUENCE [LARGE SCALE GENOMIC DNA]</scope>
    <source>
        <strain>ATCC BAA-895 / CDC 4225-83 / SGSC4696</strain>
    </source>
</reference>
<evidence type="ECO:0000255" key="1">
    <source>
        <dbReference type="HAMAP-Rule" id="MF_00682"/>
    </source>
</evidence>
<gene>
    <name evidence="1" type="primary">hscB</name>
    <name type="ordered locus">CKO_00254</name>
</gene>
<organism>
    <name type="scientific">Citrobacter koseri (strain ATCC BAA-895 / CDC 4225-83 / SGSC4696)</name>
    <dbReference type="NCBI Taxonomy" id="290338"/>
    <lineage>
        <taxon>Bacteria</taxon>
        <taxon>Pseudomonadati</taxon>
        <taxon>Pseudomonadota</taxon>
        <taxon>Gammaproteobacteria</taxon>
        <taxon>Enterobacterales</taxon>
        <taxon>Enterobacteriaceae</taxon>
        <taxon>Citrobacter</taxon>
    </lineage>
</organism>
<sequence>MDYFTLFGLPAHYQLDTQALSLRFQDLQRQYHPDKFASGTQAEQLAAVQHSATINQAWQTLRHPLTRAEYLLSLHGFDLASEQHTVRDTAFLMEQLELREELDEIEQAKDEARLESFIKRVKTMFDARHQLMVEQLDNETWDVAADTVRKLRFLDKLRSSAEQLEEKLLDF</sequence>
<keyword id="KW-0143">Chaperone</keyword>
<keyword id="KW-1185">Reference proteome</keyword>